<sequence length="301" mass="34800">MNGTLTHLQQLEAESIHIIREVVAEFANPVMLYSIGKDSAVMLHLARKAFFPAPPPFPLLHVDTTWKFREMIQFRDRMAAECGLDLIVHVNEEGVKNGISPFTHGSALYTDVMKTEGLKQALDKYKFDAAFGGARRDEEKSRAKERIFSFRCTNHRWDPKNQRPELWNLYNTRIKPGESIRVFPLSNWTELDVWQYIHLENIPIVPLYYAAVRPVVERDGMLIMVDDERLELKPGEKVQYKSVRFRTLGCYPLTGAVESTADTLPQIIQEMLLTRTSERQGRLIDHDQDGSMEKKKQEGYF</sequence>
<dbReference type="EC" id="2.7.7.4" evidence="1"/>
<dbReference type="EMBL" id="CP000698">
    <property type="protein sequence ID" value="ABQ28081.1"/>
    <property type="status" value="ALT_INIT"/>
    <property type="molecule type" value="Genomic_DNA"/>
</dbReference>
<dbReference type="RefSeq" id="WP_041245579.1">
    <property type="nucleotide sequence ID" value="NC_009483.1"/>
</dbReference>
<dbReference type="SMR" id="A5G8G3"/>
<dbReference type="STRING" id="351605.Gura_3934"/>
<dbReference type="KEGG" id="gur:Gura_3934"/>
<dbReference type="HOGENOM" id="CLU_043026_0_0_7"/>
<dbReference type="OrthoDB" id="9772604at2"/>
<dbReference type="UniPathway" id="UPA00140">
    <property type="reaction ID" value="UER00204"/>
</dbReference>
<dbReference type="Proteomes" id="UP000006695">
    <property type="component" value="Chromosome"/>
</dbReference>
<dbReference type="GO" id="GO:0005524">
    <property type="term" value="F:ATP binding"/>
    <property type="evidence" value="ECO:0007669"/>
    <property type="project" value="UniProtKB-KW"/>
</dbReference>
<dbReference type="GO" id="GO:0004781">
    <property type="term" value="F:sulfate adenylyltransferase (ATP) activity"/>
    <property type="evidence" value="ECO:0007669"/>
    <property type="project" value="UniProtKB-UniRule"/>
</dbReference>
<dbReference type="GO" id="GO:0070814">
    <property type="term" value="P:hydrogen sulfide biosynthetic process"/>
    <property type="evidence" value="ECO:0007669"/>
    <property type="project" value="UniProtKB-UniRule"/>
</dbReference>
<dbReference type="GO" id="GO:0000103">
    <property type="term" value="P:sulfate assimilation"/>
    <property type="evidence" value="ECO:0007669"/>
    <property type="project" value="UniProtKB-UniRule"/>
</dbReference>
<dbReference type="CDD" id="cd23946">
    <property type="entry name" value="Sulfate_adenylyltransferase_2"/>
    <property type="match status" value="1"/>
</dbReference>
<dbReference type="FunFam" id="3.40.50.620:FF:000002">
    <property type="entry name" value="Sulfate adenylyltransferase subunit 2"/>
    <property type="match status" value="1"/>
</dbReference>
<dbReference type="Gene3D" id="3.40.50.620">
    <property type="entry name" value="HUPs"/>
    <property type="match status" value="1"/>
</dbReference>
<dbReference type="HAMAP" id="MF_00064">
    <property type="entry name" value="Sulf_adenylyltr_sub2"/>
    <property type="match status" value="1"/>
</dbReference>
<dbReference type="InterPro" id="IPR002500">
    <property type="entry name" value="PAPS_reduct_dom"/>
</dbReference>
<dbReference type="InterPro" id="IPR014729">
    <property type="entry name" value="Rossmann-like_a/b/a_fold"/>
</dbReference>
<dbReference type="InterPro" id="IPR011784">
    <property type="entry name" value="SO4_adenylTrfase_ssu"/>
</dbReference>
<dbReference type="InterPro" id="IPR050128">
    <property type="entry name" value="Sulfate_adenylyltrnsfr_sub2"/>
</dbReference>
<dbReference type="NCBIfam" id="TIGR02039">
    <property type="entry name" value="CysD"/>
    <property type="match status" value="1"/>
</dbReference>
<dbReference type="NCBIfam" id="NF003587">
    <property type="entry name" value="PRK05253.1"/>
    <property type="match status" value="1"/>
</dbReference>
<dbReference type="NCBIfam" id="NF009214">
    <property type="entry name" value="PRK12563.1"/>
    <property type="match status" value="1"/>
</dbReference>
<dbReference type="PANTHER" id="PTHR43196">
    <property type="entry name" value="SULFATE ADENYLYLTRANSFERASE SUBUNIT 2"/>
    <property type="match status" value="1"/>
</dbReference>
<dbReference type="PANTHER" id="PTHR43196:SF1">
    <property type="entry name" value="SULFATE ADENYLYLTRANSFERASE SUBUNIT 2"/>
    <property type="match status" value="1"/>
</dbReference>
<dbReference type="Pfam" id="PF01507">
    <property type="entry name" value="PAPS_reduct"/>
    <property type="match status" value="1"/>
</dbReference>
<dbReference type="PIRSF" id="PIRSF002936">
    <property type="entry name" value="CysDAde_trans"/>
    <property type="match status" value="1"/>
</dbReference>
<dbReference type="SUPFAM" id="SSF52402">
    <property type="entry name" value="Adenine nucleotide alpha hydrolases-like"/>
    <property type="match status" value="1"/>
</dbReference>
<reference key="1">
    <citation type="submission" date="2007-05" db="EMBL/GenBank/DDBJ databases">
        <title>Complete sequence of Geobacter uraniireducens Rf4.</title>
        <authorList>
            <consortium name="US DOE Joint Genome Institute"/>
            <person name="Copeland A."/>
            <person name="Lucas S."/>
            <person name="Lapidus A."/>
            <person name="Barry K."/>
            <person name="Detter J.C."/>
            <person name="Glavina del Rio T."/>
            <person name="Hammon N."/>
            <person name="Israni S."/>
            <person name="Dalin E."/>
            <person name="Tice H."/>
            <person name="Pitluck S."/>
            <person name="Chertkov O."/>
            <person name="Brettin T."/>
            <person name="Bruce D."/>
            <person name="Han C."/>
            <person name="Schmutz J."/>
            <person name="Larimer F."/>
            <person name="Land M."/>
            <person name="Hauser L."/>
            <person name="Kyrpides N."/>
            <person name="Mikhailova N."/>
            <person name="Shelobolina E."/>
            <person name="Aklujkar M."/>
            <person name="Lovley D."/>
            <person name="Richardson P."/>
        </authorList>
    </citation>
    <scope>NUCLEOTIDE SEQUENCE [LARGE SCALE GENOMIC DNA]</scope>
    <source>
        <strain>ATCC BAA-1134 / JCM 13001 / Rf4</strain>
    </source>
</reference>
<accession>A5G8G3</accession>
<protein>
    <recommendedName>
        <fullName evidence="1">Sulfate adenylyltransferase subunit 2</fullName>
        <ecNumber evidence="1">2.7.7.4</ecNumber>
    </recommendedName>
    <alternativeName>
        <fullName evidence="1">ATP-sulfurylase small subunit</fullName>
    </alternativeName>
    <alternativeName>
        <fullName evidence="1">Sulfate adenylate transferase</fullName>
        <shortName evidence="1">SAT</shortName>
    </alternativeName>
</protein>
<feature type="chain" id="PRO_0000340195" description="Sulfate adenylyltransferase subunit 2">
    <location>
        <begin position="1"/>
        <end position="301"/>
    </location>
</feature>
<feature type="region of interest" description="Disordered" evidence="2">
    <location>
        <begin position="279"/>
        <end position="301"/>
    </location>
</feature>
<gene>
    <name evidence="1" type="primary">cysD</name>
    <name type="ordered locus">Gura_3934</name>
</gene>
<name>CYSD_GEOUR</name>
<evidence type="ECO:0000255" key="1">
    <source>
        <dbReference type="HAMAP-Rule" id="MF_00064"/>
    </source>
</evidence>
<evidence type="ECO:0000256" key="2">
    <source>
        <dbReference type="SAM" id="MobiDB-lite"/>
    </source>
</evidence>
<evidence type="ECO:0000305" key="3"/>
<comment type="function">
    <text evidence="1">With CysN forms the ATP sulfurylase (ATPS) that catalyzes the adenylation of sulfate producing adenosine 5'-phosphosulfate (APS) and diphosphate, the first enzymatic step in sulfur assimilation pathway. APS synthesis involves the formation of a high-energy phosphoric-sulfuric acid anhydride bond driven by GTP hydrolysis by CysN coupled to ATP hydrolysis by CysD.</text>
</comment>
<comment type="catalytic activity">
    <reaction evidence="1">
        <text>sulfate + ATP + H(+) = adenosine 5'-phosphosulfate + diphosphate</text>
        <dbReference type="Rhea" id="RHEA:18133"/>
        <dbReference type="ChEBI" id="CHEBI:15378"/>
        <dbReference type="ChEBI" id="CHEBI:16189"/>
        <dbReference type="ChEBI" id="CHEBI:30616"/>
        <dbReference type="ChEBI" id="CHEBI:33019"/>
        <dbReference type="ChEBI" id="CHEBI:58243"/>
        <dbReference type="EC" id="2.7.7.4"/>
    </reaction>
</comment>
<comment type="pathway">
    <text evidence="1">Sulfur metabolism; hydrogen sulfide biosynthesis; sulfite from sulfate: step 1/3.</text>
</comment>
<comment type="subunit">
    <text evidence="1">Heterodimer composed of CysD, the smaller subunit, and CysN.</text>
</comment>
<comment type="similarity">
    <text evidence="1">Belongs to the PAPS reductase family. CysD subfamily.</text>
</comment>
<comment type="sequence caution" evidence="3">
    <conflict type="erroneous initiation">
        <sequence resource="EMBL-CDS" id="ABQ28081"/>
    </conflict>
</comment>
<proteinExistence type="inferred from homology"/>
<organism>
    <name type="scientific">Geotalea uraniireducens (strain Rf4)</name>
    <name type="common">Geobacter uraniireducens</name>
    <dbReference type="NCBI Taxonomy" id="351605"/>
    <lineage>
        <taxon>Bacteria</taxon>
        <taxon>Pseudomonadati</taxon>
        <taxon>Thermodesulfobacteriota</taxon>
        <taxon>Desulfuromonadia</taxon>
        <taxon>Geobacterales</taxon>
        <taxon>Geobacteraceae</taxon>
        <taxon>Geotalea</taxon>
    </lineage>
</organism>
<keyword id="KW-0067">ATP-binding</keyword>
<keyword id="KW-0547">Nucleotide-binding</keyword>
<keyword id="KW-0548">Nucleotidyltransferase</keyword>
<keyword id="KW-1185">Reference proteome</keyword>
<keyword id="KW-0808">Transferase</keyword>